<reference key="1">
    <citation type="submission" date="2007-08" db="EMBL/GenBank/DDBJ databases">
        <title>Complete sequence of Shewanella sediminis HAW-EB3.</title>
        <authorList>
            <consortium name="US DOE Joint Genome Institute"/>
            <person name="Copeland A."/>
            <person name="Lucas S."/>
            <person name="Lapidus A."/>
            <person name="Barry K."/>
            <person name="Glavina del Rio T."/>
            <person name="Dalin E."/>
            <person name="Tice H."/>
            <person name="Pitluck S."/>
            <person name="Chertkov O."/>
            <person name="Brettin T."/>
            <person name="Bruce D."/>
            <person name="Detter J.C."/>
            <person name="Han C."/>
            <person name="Schmutz J."/>
            <person name="Larimer F."/>
            <person name="Land M."/>
            <person name="Hauser L."/>
            <person name="Kyrpides N."/>
            <person name="Kim E."/>
            <person name="Zhao J.-S."/>
            <person name="Richardson P."/>
        </authorList>
    </citation>
    <scope>NUCLEOTIDE SEQUENCE [LARGE SCALE GENOMIC DNA]</scope>
    <source>
        <strain>HAW-EB3</strain>
    </source>
</reference>
<gene>
    <name evidence="1" type="primary">coaD</name>
    <name type="ordered locus">Ssed_0115</name>
</gene>
<evidence type="ECO:0000255" key="1">
    <source>
        <dbReference type="HAMAP-Rule" id="MF_00151"/>
    </source>
</evidence>
<feature type="chain" id="PRO_1000076789" description="Phosphopantetheine adenylyltransferase">
    <location>
        <begin position="1"/>
        <end position="158"/>
    </location>
</feature>
<feature type="binding site" evidence="1">
    <location>
        <begin position="10"/>
        <end position="11"/>
    </location>
    <ligand>
        <name>ATP</name>
        <dbReference type="ChEBI" id="CHEBI:30616"/>
    </ligand>
</feature>
<feature type="binding site" evidence="1">
    <location>
        <position position="10"/>
    </location>
    <ligand>
        <name>substrate</name>
    </ligand>
</feature>
<feature type="binding site" evidence="1">
    <location>
        <position position="18"/>
    </location>
    <ligand>
        <name>ATP</name>
        <dbReference type="ChEBI" id="CHEBI:30616"/>
    </ligand>
</feature>
<feature type="binding site" evidence="1">
    <location>
        <position position="42"/>
    </location>
    <ligand>
        <name>substrate</name>
    </ligand>
</feature>
<feature type="binding site" evidence="1">
    <location>
        <position position="74"/>
    </location>
    <ligand>
        <name>substrate</name>
    </ligand>
</feature>
<feature type="binding site" evidence="1">
    <location>
        <position position="88"/>
    </location>
    <ligand>
        <name>substrate</name>
    </ligand>
</feature>
<feature type="binding site" evidence="1">
    <location>
        <begin position="89"/>
        <end position="91"/>
    </location>
    <ligand>
        <name>ATP</name>
        <dbReference type="ChEBI" id="CHEBI:30616"/>
    </ligand>
</feature>
<feature type="binding site" evidence="1">
    <location>
        <position position="99"/>
    </location>
    <ligand>
        <name>ATP</name>
        <dbReference type="ChEBI" id="CHEBI:30616"/>
    </ligand>
</feature>
<feature type="binding site" evidence="1">
    <location>
        <begin position="124"/>
        <end position="130"/>
    </location>
    <ligand>
        <name>ATP</name>
        <dbReference type="ChEBI" id="CHEBI:30616"/>
    </ligand>
</feature>
<feature type="site" description="Transition state stabilizer" evidence="1">
    <location>
        <position position="18"/>
    </location>
</feature>
<dbReference type="EC" id="2.7.7.3" evidence="1"/>
<dbReference type="EMBL" id="CP000821">
    <property type="protein sequence ID" value="ABV34728.1"/>
    <property type="molecule type" value="Genomic_DNA"/>
</dbReference>
<dbReference type="RefSeq" id="WP_012004254.1">
    <property type="nucleotide sequence ID" value="NC_009831.1"/>
</dbReference>
<dbReference type="SMR" id="A8FPF5"/>
<dbReference type="STRING" id="425104.Ssed_0115"/>
<dbReference type="KEGG" id="sse:Ssed_0115"/>
<dbReference type="eggNOG" id="COG0669">
    <property type="taxonomic scope" value="Bacteria"/>
</dbReference>
<dbReference type="HOGENOM" id="CLU_100149_0_1_6"/>
<dbReference type="OrthoDB" id="9806661at2"/>
<dbReference type="UniPathway" id="UPA00241">
    <property type="reaction ID" value="UER00355"/>
</dbReference>
<dbReference type="Proteomes" id="UP000002015">
    <property type="component" value="Chromosome"/>
</dbReference>
<dbReference type="GO" id="GO:0005737">
    <property type="term" value="C:cytoplasm"/>
    <property type="evidence" value="ECO:0007669"/>
    <property type="project" value="UniProtKB-SubCell"/>
</dbReference>
<dbReference type="GO" id="GO:0005524">
    <property type="term" value="F:ATP binding"/>
    <property type="evidence" value="ECO:0007669"/>
    <property type="project" value="UniProtKB-KW"/>
</dbReference>
<dbReference type="GO" id="GO:0004595">
    <property type="term" value="F:pantetheine-phosphate adenylyltransferase activity"/>
    <property type="evidence" value="ECO:0007669"/>
    <property type="project" value="UniProtKB-UniRule"/>
</dbReference>
<dbReference type="GO" id="GO:0015937">
    <property type="term" value="P:coenzyme A biosynthetic process"/>
    <property type="evidence" value="ECO:0007669"/>
    <property type="project" value="UniProtKB-UniRule"/>
</dbReference>
<dbReference type="CDD" id="cd02163">
    <property type="entry name" value="PPAT"/>
    <property type="match status" value="1"/>
</dbReference>
<dbReference type="FunFam" id="3.40.50.620:FF:000012">
    <property type="entry name" value="Phosphopantetheine adenylyltransferase"/>
    <property type="match status" value="1"/>
</dbReference>
<dbReference type="Gene3D" id="3.40.50.620">
    <property type="entry name" value="HUPs"/>
    <property type="match status" value="1"/>
</dbReference>
<dbReference type="HAMAP" id="MF_00151">
    <property type="entry name" value="PPAT_bact"/>
    <property type="match status" value="1"/>
</dbReference>
<dbReference type="InterPro" id="IPR004821">
    <property type="entry name" value="Cyt_trans-like"/>
</dbReference>
<dbReference type="InterPro" id="IPR001980">
    <property type="entry name" value="PPAT"/>
</dbReference>
<dbReference type="InterPro" id="IPR014729">
    <property type="entry name" value="Rossmann-like_a/b/a_fold"/>
</dbReference>
<dbReference type="NCBIfam" id="TIGR01510">
    <property type="entry name" value="coaD_prev_kdtB"/>
    <property type="match status" value="1"/>
</dbReference>
<dbReference type="NCBIfam" id="TIGR00125">
    <property type="entry name" value="cyt_tran_rel"/>
    <property type="match status" value="1"/>
</dbReference>
<dbReference type="PANTHER" id="PTHR21342">
    <property type="entry name" value="PHOSPHOPANTETHEINE ADENYLYLTRANSFERASE"/>
    <property type="match status" value="1"/>
</dbReference>
<dbReference type="PANTHER" id="PTHR21342:SF1">
    <property type="entry name" value="PHOSPHOPANTETHEINE ADENYLYLTRANSFERASE"/>
    <property type="match status" value="1"/>
</dbReference>
<dbReference type="Pfam" id="PF01467">
    <property type="entry name" value="CTP_transf_like"/>
    <property type="match status" value="1"/>
</dbReference>
<dbReference type="PRINTS" id="PR01020">
    <property type="entry name" value="LPSBIOSNTHSS"/>
</dbReference>
<dbReference type="SUPFAM" id="SSF52374">
    <property type="entry name" value="Nucleotidylyl transferase"/>
    <property type="match status" value="1"/>
</dbReference>
<sequence length="158" mass="17443">MHTRAIYPGTFDPVTNGHADLIERAAKLFKHVVIGIAANPSKKPRFTLEERVALLQLVTSHLDNVEVVGFSGLLVDFAKEQKASVLVRGLRAVSDFEYEFQLANMNRRLSSDLESVFLTPAEENSFISSTLVKEVAHHGGDVSQFVHPEVAKALMTNV</sequence>
<name>COAD_SHESH</name>
<organism>
    <name type="scientific">Shewanella sediminis (strain HAW-EB3)</name>
    <dbReference type="NCBI Taxonomy" id="425104"/>
    <lineage>
        <taxon>Bacteria</taxon>
        <taxon>Pseudomonadati</taxon>
        <taxon>Pseudomonadota</taxon>
        <taxon>Gammaproteobacteria</taxon>
        <taxon>Alteromonadales</taxon>
        <taxon>Shewanellaceae</taxon>
        <taxon>Shewanella</taxon>
    </lineage>
</organism>
<keyword id="KW-0067">ATP-binding</keyword>
<keyword id="KW-0173">Coenzyme A biosynthesis</keyword>
<keyword id="KW-0963">Cytoplasm</keyword>
<keyword id="KW-0460">Magnesium</keyword>
<keyword id="KW-0547">Nucleotide-binding</keyword>
<keyword id="KW-0548">Nucleotidyltransferase</keyword>
<keyword id="KW-1185">Reference proteome</keyword>
<keyword id="KW-0808">Transferase</keyword>
<accession>A8FPF5</accession>
<protein>
    <recommendedName>
        <fullName evidence="1">Phosphopantetheine adenylyltransferase</fullName>
        <ecNumber evidence="1">2.7.7.3</ecNumber>
    </recommendedName>
    <alternativeName>
        <fullName evidence="1">Dephospho-CoA pyrophosphorylase</fullName>
    </alternativeName>
    <alternativeName>
        <fullName evidence="1">Pantetheine-phosphate adenylyltransferase</fullName>
        <shortName evidence="1">PPAT</shortName>
    </alternativeName>
</protein>
<comment type="function">
    <text evidence="1">Reversibly transfers an adenylyl group from ATP to 4'-phosphopantetheine, yielding dephospho-CoA (dPCoA) and pyrophosphate.</text>
</comment>
<comment type="catalytic activity">
    <reaction evidence="1">
        <text>(R)-4'-phosphopantetheine + ATP + H(+) = 3'-dephospho-CoA + diphosphate</text>
        <dbReference type="Rhea" id="RHEA:19801"/>
        <dbReference type="ChEBI" id="CHEBI:15378"/>
        <dbReference type="ChEBI" id="CHEBI:30616"/>
        <dbReference type="ChEBI" id="CHEBI:33019"/>
        <dbReference type="ChEBI" id="CHEBI:57328"/>
        <dbReference type="ChEBI" id="CHEBI:61723"/>
        <dbReference type="EC" id="2.7.7.3"/>
    </reaction>
</comment>
<comment type="cofactor">
    <cofactor evidence="1">
        <name>Mg(2+)</name>
        <dbReference type="ChEBI" id="CHEBI:18420"/>
    </cofactor>
</comment>
<comment type="pathway">
    <text evidence="1">Cofactor biosynthesis; coenzyme A biosynthesis; CoA from (R)-pantothenate: step 4/5.</text>
</comment>
<comment type="subunit">
    <text evidence="1">Homohexamer.</text>
</comment>
<comment type="subcellular location">
    <subcellularLocation>
        <location evidence="1">Cytoplasm</location>
    </subcellularLocation>
</comment>
<comment type="similarity">
    <text evidence="1">Belongs to the bacterial CoaD family.</text>
</comment>
<proteinExistence type="inferred from homology"/>